<keyword id="KW-0025">Alternative splicing</keyword>
<keyword id="KW-0966">Cell projection</keyword>
<keyword id="KW-0969">Cilium</keyword>
<keyword id="KW-0175">Coiled coil</keyword>
<keyword id="KW-0963">Cytoplasm</keyword>
<keyword id="KW-0206">Cytoskeleton</keyword>
<keyword id="KW-0597">Phosphoprotein</keyword>
<keyword id="KW-0653">Protein transport</keyword>
<keyword id="KW-1267">Proteomics identification</keyword>
<keyword id="KW-1185">Reference proteome</keyword>
<keyword id="KW-0702">S-nitrosylation</keyword>
<keyword id="KW-0813">Transport</keyword>
<feature type="chain" id="PRO_0000299310" description="RILP-like protein 1">
    <location>
        <begin position="1"/>
        <end position="403"/>
    </location>
</feature>
<feature type="domain" description="RH1" evidence="5">
    <location>
        <begin position="10"/>
        <end position="97"/>
    </location>
</feature>
<feature type="domain" description="RH2" evidence="6">
    <location>
        <begin position="291"/>
        <end position="356"/>
    </location>
</feature>
<feature type="region of interest" description="Disordered" evidence="7">
    <location>
        <begin position="254"/>
        <end position="275"/>
    </location>
</feature>
<feature type="region of interest" description="Disordered" evidence="7">
    <location>
        <begin position="327"/>
        <end position="352"/>
    </location>
</feature>
<feature type="region of interest" description="Disordered" evidence="7">
    <location>
        <begin position="384"/>
        <end position="403"/>
    </location>
</feature>
<feature type="coiled-coil region" evidence="4">
    <location>
        <begin position="76"/>
        <end position="258"/>
    </location>
</feature>
<feature type="compositionally biased region" description="Acidic residues" evidence="7">
    <location>
        <begin position="262"/>
        <end position="275"/>
    </location>
</feature>
<feature type="compositionally biased region" description="Polar residues" evidence="7">
    <location>
        <begin position="394"/>
        <end position="403"/>
    </location>
</feature>
<feature type="modified residue" description="Phosphoserine" evidence="2">
    <location>
        <position position="7"/>
    </location>
</feature>
<feature type="modified residue" description="S-nitrosocysteine" evidence="2">
    <location>
        <position position="47"/>
    </location>
</feature>
<feature type="modified residue" description="Phosphoserine" evidence="15">
    <location>
        <position position="259"/>
    </location>
</feature>
<feature type="splice variant" id="VSP_027605" description="In isoform 3." evidence="13">
    <location>
        <begin position="1"/>
        <end position="151"/>
    </location>
</feature>
<feature type="splice variant" id="VSP_027606" description="In isoform 2." evidence="12">
    <location>
        <begin position="1"/>
        <end position="24"/>
    </location>
</feature>
<feature type="splice variant" id="VSP_027607" description="In isoform 3." evidence="13">
    <original>HE</original>
    <variation>MT</variation>
    <location>
        <begin position="152"/>
        <end position="153"/>
    </location>
</feature>
<feature type="splice variant" id="VSP_027608" description="In isoform 2." evidence="12">
    <original>FSFFSRDKKRLANTQRNVHIQESFGQWANTHRDDGYTEQGQEALQHL</original>
    <variation>IFTAIMPMVAAGLIIDDPTLQPVRRLVSLV</variation>
    <location>
        <begin position="357"/>
        <end position="403"/>
    </location>
</feature>
<feature type="mutagenesis site" description="Loss of interaction with RAB8A and RAB10." evidence="9">
    <original>R</original>
    <variation>L</variation>
    <variation>E</variation>
    <location>
        <position position="291"/>
    </location>
</feature>
<feature type="mutagenesis site" description="Loss of interaction with RAB8A." evidence="9">
    <original>R</original>
    <variation>L</variation>
    <variation>E</variation>
    <location>
        <position position="293"/>
    </location>
</feature>
<feature type="mutagenesis site" description="No loss of interaction with RAB8A." evidence="9">
    <original>R</original>
    <variation>L</variation>
    <variation>E</variation>
    <location>
        <position position="300"/>
    </location>
</feature>
<feature type="mutagenesis site" description="Loss of interaction with RAB8A." evidence="9">
    <original>K</original>
    <variation>L</variation>
    <variation>E</variation>
    <location>
        <position position="310"/>
    </location>
</feature>
<feature type="mutagenesis site" description="No loss of interaction with RAB8A." evidence="9">
    <original>K</original>
    <variation>L</variation>
    <variation>E</variation>
    <location>
        <position position="324"/>
    </location>
</feature>
<comment type="function">
    <text evidence="2 3 8 10">Plays a role in the regulation of cell shape and polarity (By similarity). Plays a role in cellular protein transport, including protein transport away from primary cilia (By similarity). Neuroprotective protein, which acts by sequestring GAPDH in the cytosol and prevent the apoptotic function of GAPDH in the nucleus (By similarity). Competes with SIAH1 for binding GAPDH (By similarity). Does not regulate lysosomal morphology and distribution (PubMed:14668488). Binds to RAB10 following LRRK2-mediated RAB10 phosphorylation which leads to inhibition of ciliogenesis (PubMed:30398148).</text>
</comment>
<comment type="subunit">
    <text evidence="2 9 10">Interacts (when S-nitrosylated) with GAPDH (By similarity). Interacts with RAB8A; interaction is dependent on the phosphorylation of 'Thr-72' of RAB8A (PubMed:29125462, PubMed:30398148). Interacts with RAB10 and RAB12; the interaction is dependent on the phosphorylation of 'Thr-73' of RAB10, and 'Ser-105' of RAB12 (PubMed:29125462, PubMed:30398148).</text>
</comment>
<comment type="interaction">
    <interactant intactId="EBI-2797110">
        <id>Q5EBL4</id>
    </interactant>
    <interactant intactId="EBI-722293">
        <id>P61006</id>
        <label>RAB8A</label>
    </interactant>
    <organismsDiffer>false</organismsDiffer>
    <experiments>2</experiments>
</comment>
<comment type="interaction">
    <interactant intactId="EBI-12072024">
        <id>Q5EBL4-3</id>
    </interactant>
    <interactant intactId="EBI-743771">
        <id>Q92624</id>
        <label>APPBP2</label>
    </interactant>
    <organismsDiffer>false</organismsDiffer>
    <experiments>3</experiments>
</comment>
<comment type="interaction">
    <interactant intactId="EBI-12072024">
        <id>Q5EBL4-3</id>
    </interactant>
    <interactant intactId="EBI-12179105">
        <id>O75425</id>
        <label>MOSPD3</label>
    </interactant>
    <organismsDiffer>false</organismsDiffer>
    <experiments>3</experiments>
</comment>
<comment type="interaction">
    <interactant intactId="EBI-12072024">
        <id>Q5EBL4-3</id>
    </interactant>
    <interactant intactId="EBI-741158">
        <id>Q96HA8</id>
        <label>NTAQ1</label>
    </interactant>
    <organismsDiffer>false</organismsDiffer>
    <experiments>3</experiments>
</comment>
<comment type="interaction">
    <interactant intactId="EBI-12072024">
        <id>Q5EBL4-3</id>
    </interactant>
    <interactant intactId="EBI-6164623">
        <id>Q86T03</id>
        <label>PIP4P1</label>
    </interactant>
    <organismsDiffer>false</organismsDiffer>
    <experiments>5</experiments>
</comment>
<comment type="interaction">
    <interactant intactId="EBI-12072024">
        <id>Q5EBL4-3</id>
    </interactant>
    <interactant intactId="EBI-8652744">
        <id>Q96IW7</id>
        <label>SEC22A</label>
    </interactant>
    <organismsDiffer>false</organismsDiffer>
    <experiments>3</experiments>
</comment>
<comment type="interaction">
    <interactant intactId="EBI-12072024">
        <id>Q5EBL4-3</id>
    </interactant>
    <interactant intactId="EBI-765817">
        <id>Q9Y228</id>
        <label>TRAF3IP3</label>
    </interactant>
    <organismsDiffer>false</organismsDiffer>
    <experiments>3</experiments>
</comment>
<comment type="subcellular location">
    <subcellularLocation>
        <location evidence="8 10">Cytoplasm</location>
        <location evidence="8 10">Cytosol</location>
    </subcellularLocation>
    <subcellularLocation>
        <location evidence="10">Cytoplasm</location>
        <location evidence="10">Cytoskeleton</location>
        <location evidence="10">Microtubule organizing center</location>
        <location evidence="10">Centrosome</location>
        <location evidence="10">Centriole</location>
    </subcellularLocation>
    <subcellularLocation>
        <location evidence="10">Cytoplasm</location>
        <location evidence="10">Cytoskeleton</location>
        <location evidence="10">Cilium basal body</location>
    </subcellularLocation>
</comment>
<comment type="alternative products">
    <event type="alternative splicing"/>
    <isoform>
        <id>Q5EBL4-1</id>
        <name>1</name>
        <sequence type="displayed"/>
    </isoform>
    <isoform>
        <id>Q5EBL4-2</id>
        <name>2</name>
        <sequence type="described" ref="VSP_027606 VSP_027608"/>
    </isoform>
    <isoform>
        <id>Q5EBL4-3</id>
        <name>3</name>
        <sequence type="described" ref="VSP_027605 VSP_027607"/>
    </isoform>
</comment>
<comment type="tissue specificity">
    <text evidence="8">Widely expressed. Expressed at lower level in liver and kidney.</text>
</comment>
<comment type="PTM">
    <text evidence="1">S-nitrosylation is required for the interaction with GAPDH.</text>
</comment>
<comment type="disease" evidence="11">
    <disease id="DI-06365">
        <name>Oculopharyngodistal myopathy 4</name>
        <acronym>OPDM4</acronym>
        <description>A form of oculopharyngodistal myopathy, a muscle disorder characterized by progressive ptosis, external ophthalmoplegia, and weakness of the masseter, facial, pharyngeal, and distal limb muscles. The myopathological features are presence of rimmed vacuoles in the muscle fibers and myopathic changes of differing severity. OPDM4 is an autosomal dominant form characterized by slow progression and onset of symptoms in the second or third decades.</description>
        <dbReference type="MIM" id="619790"/>
    </disease>
    <text evidence="11">The disease is caused by variants affecting the gene represented in this entry. The causative mutation is a heterozygous trinucleotide repeat expansion (CGG) in the 5-prime untranslated region of the gene. The expansion ranges from 139 to 197 repeats in individuals with OPDM, and 9 to 1 repeats in controls.</text>
</comment>
<comment type="similarity">
    <text evidence="14">Belongs to the RILPL family.</text>
</comment>
<reference key="1">
    <citation type="journal article" date="2004" name="Nat. Genet.">
        <title>Complete sequencing and characterization of 21,243 full-length human cDNAs.</title>
        <authorList>
            <person name="Ota T."/>
            <person name="Suzuki Y."/>
            <person name="Nishikawa T."/>
            <person name="Otsuki T."/>
            <person name="Sugiyama T."/>
            <person name="Irie R."/>
            <person name="Wakamatsu A."/>
            <person name="Hayashi K."/>
            <person name="Sato H."/>
            <person name="Nagai K."/>
            <person name="Kimura K."/>
            <person name="Makita H."/>
            <person name="Sekine M."/>
            <person name="Obayashi M."/>
            <person name="Nishi T."/>
            <person name="Shibahara T."/>
            <person name="Tanaka T."/>
            <person name="Ishii S."/>
            <person name="Yamamoto J."/>
            <person name="Saito K."/>
            <person name="Kawai Y."/>
            <person name="Isono Y."/>
            <person name="Nakamura Y."/>
            <person name="Nagahari K."/>
            <person name="Murakami K."/>
            <person name="Yasuda T."/>
            <person name="Iwayanagi T."/>
            <person name="Wagatsuma M."/>
            <person name="Shiratori A."/>
            <person name="Sudo H."/>
            <person name="Hosoiri T."/>
            <person name="Kaku Y."/>
            <person name="Kodaira H."/>
            <person name="Kondo H."/>
            <person name="Sugawara M."/>
            <person name="Takahashi M."/>
            <person name="Kanda K."/>
            <person name="Yokoi T."/>
            <person name="Furuya T."/>
            <person name="Kikkawa E."/>
            <person name="Omura Y."/>
            <person name="Abe K."/>
            <person name="Kamihara K."/>
            <person name="Katsuta N."/>
            <person name="Sato K."/>
            <person name="Tanikawa M."/>
            <person name="Yamazaki M."/>
            <person name="Ninomiya K."/>
            <person name="Ishibashi T."/>
            <person name="Yamashita H."/>
            <person name="Murakawa K."/>
            <person name="Fujimori K."/>
            <person name="Tanai H."/>
            <person name="Kimata M."/>
            <person name="Watanabe M."/>
            <person name="Hiraoka S."/>
            <person name="Chiba Y."/>
            <person name="Ishida S."/>
            <person name="Ono Y."/>
            <person name="Takiguchi S."/>
            <person name="Watanabe S."/>
            <person name="Yosida M."/>
            <person name="Hotuta T."/>
            <person name="Kusano J."/>
            <person name="Kanehori K."/>
            <person name="Takahashi-Fujii A."/>
            <person name="Hara H."/>
            <person name="Tanase T.-O."/>
            <person name="Nomura Y."/>
            <person name="Togiya S."/>
            <person name="Komai F."/>
            <person name="Hara R."/>
            <person name="Takeuchi K."/>
            <person name="Arita M."/>
            <person name="Imose N."/>
            <person name="Musashino K."/>
            <person name="Yuuki H."/>
            <person name="Oshima A."/>
            <person name="Sasaki N."/>
            <person name="Aotsuka S."/>
            <person name="Yoshikawa Y."/>
            <person name="Matsunawa H."/>
            <person name="Ichihara T."/>
            <person name="Shiohata N."/>
            <person name="Sano S."/>
            <person name="Moriya S."/>
            <person name="Momiyama H."/>
            <person name="Satoh N."/>
            <person name="Takami S."/>
            <person name="Terashima Y."/>
            <person name="Suzuki O."/>
            <person name="Nakagawa S."/>
            <person name="Senoh A."/>
            <person name="Mizoguchi H."/>
            <person name="Goto Y."/>
            <person name="Shimizu F."/>
            <person name="Wakebe H."/>
            <person name="Hishigaki H."/>
            <person name="Watanabe T."/>
            <person name="Sugiyama A."/>
            <person name="Takemoto M."/>
            <person name="Kawakami B."/>
            <person name="Yamazaki M."/>
            <person name="Watanabe K."/>
            <person name="Kumagai A."/>
            <person name="Itakura S."/>
            <person name="Fukuzumi Y."/>
            <person name="Fujimori Y."/>
            <person name="Komiyama M."/>
            <person name="Tashiro H."/>
            <person name="Tanigami A."/>
            <person name="Fujiwara T."/>
            <person name="Ono T."/>
            <person name="Yamada K."/>
            <person name="Fujii Y."/>
            <person name="Ozaki K."/>
            <person name="Hirao M."/>
            <person name="Ohmori Y."/>
            <person name="Kawabata A."/>
            <person name="Hikiji T."/>
            <person name="Kobatake N."/>
            <person name="Inagaki H."/>
            <person name="Ikema Y."/>
            <person name="Okamoto S."/>
            <person name="Okitani R."/>
            <person name="Kawakami T."/>
            <person name="Noguchi S."/>
            <person name="Itoh T."/>
            <person name="Shigeta K."/>
            <person name="Senba T."/>
            <person name="Matsumura K."/>
            <person name="Nakajima Y."/>
            <person name="Mizuno T."/>
            <person name="Morinaga M."/>
            <person name="Sasaki M."/>
            <person name="Togashi T."/>
            <person name="Oyama M."/>
            <person name="Hata H."/>
            <person name="Watanabe M."/>
            <person name="Komatsu T."/>
            <person name="Mizushima-Sugano J."/>
            <person name="Satoh T."/>
            <person name="Shirai Y."/>
            <person name="Takahashi Y."/>
            <person name="Nakagawa K."/>
            <person name="Okumura K."/>
            <person name="Nagase T."/>
            <person name="Nomura N."/>
            <person name="Kikuchi H."/>
            <person name="Masuho Y."/>
            <person name="Yamashita R."/>
            <person name="Nakai K."/>
            <person name="Yada T."/>
            <person name="Nakamura Y."/>
            <person name="Ohara O."/>
            <person name="Isogai T."/>
            <person name="Sugano S."/>
        </authorList>
    </citation>
    <scope>NUCLEOTIDE SEQUENCE [LARGE SCALE MRNA] (ISOFORM 2)</scope>
    <source>
        <tissue>Pericardium</tissue>
    </source>
</reference>
<reference key="2">
    <citation type="journal article" date="2006" name="Nature">
        <title>The finished DNA sequence of human chromosome 12.</title>
        <authorList>
            <person name="Scherer S.E."/>
            <person name="Muzny D.M."/>
            <person name="Buhay C.J."/>
            <person name="Chen R."/>
            <person name="Cree A."/>
            <person name="Ding Y."/>
            <person name="Dugan-Rocha S."/>
            <person name="Gill R."/>
            <person name="Gunaratne P."/>
            <person name="Harris R.A."/>
            <person name="Hawes A.C."/>
            <person name="Hernandez J."/>
            <person name="Hodgson A.V."/>
            <person name="Hume J."/>
            <person name="Jackson A."/>
            <person name="Khan Z.M."/>
            <person name="Kovar-Smith C."/>
            <person name="Lewis L.R."/>
            <person name="Lozado R.J."/>
            <person name="Metzker M.L."/>
            <person name="Milosavljevic A."/>
            <person name="Miner G.R."/>
            <person name="Montgomery K.T."/>
            <person name="Morgan M.B."/>
            <person name="Nazareth L.V."/>
            <person name="Scott G."/>
            <person name="Sodergren E."/>
            <person name="Song X.-Z."/>
            <person name="Steffen D."/>
            <person name="Lovering R.C."/>
            <person name="Wheeler D.A."/>
            <person name="Worley K.C."/>
            <person name="Yuan Y."/>
            <person name="Zhang Z."/>
            <person name="Adams C.Q."/>
            <person name="Ansari-Lari M.A."/>
            <person name="Ayele M."/>
            <person name="Brown M.J."/>
            <person name="Chen G."/>
            <person name="Chen Z."/>
            <person name="Clerc-Blankenburg K.P."/>
            <person name="Davis C."/>
            <person name="Delgado O."/>
            <person name="Dinh H.H."/>
            <person name="Draper H."/>
            <person name="Gonzalez-Garay M.L."/>
            <person name="Havlak P."/>
            <person name="Jackson L.R."/>
            <person name="Jacob L.S."/>
            <person name="Kelly S.H."/>
            <person name="Li L."/>
            <person name="Li Z."/>
            <person name="Liu J."/>
            <person name="Liu W."/>
            <person name="Lu J."/>
            <person name="Maheshwari M."/>
            <person name="Nguyen B.-V."/>
            <person name="Okwuonu G.O."/>
            <person name="Pasternak S."/>
            <person name="Perez L.M."/>
            <person name="Plopper F.J.H."/>
            <person name="Santibanez J."/>
            <person name="Shen H."/>
            <person name="Tabor P.E."/>
            <person name="Verduzco D."/>
            <person name="Waldron L."/>
            <person name="Wang Q."/>
            <person name="Williams G.A."/>
            <person name="Zhang J."/>
            <person name="Zhou J."/>
            <person name="Allen C.C."/>
            <person name="Amin A.G."/>
            <person name="Anyalebechi V."/>
            <person name="Bailey M."/>
            <person name="Barbaria J.A."/>
            <person name="Bimage K.E."/>
            <person name="Bryant N.P."/>
            <person name="Burch P.E."/>
            <person name="Burkett C.E."/>
            <person name="Burrell K.L."/>
            <person name="Calderon E."/>
            <person name="Cardenas V."/>
            <person name="Carter K."/>
            <person name="Casias K."/>
            <person name="Cavazos I."/>
            <person name="Cavazos S.R."/>
            <person name="Ceasar H."/>
            <person name="Chacko J."/>
            <person name="Chan S.N."/>
            <person name="Chavez D."/>
            <person name="Christopoulos C."/>
            <person name="Chu J."/>
            <person name="Cockrell R."/>
            <person name="Cox C.D."/>
            <person name="Dang M."/>
            <person name="Dathorne S.R."/>
            <person name="David R."/>
            <person name="Davis C.M."/>
            <person name="Davy-Carroll L."/>
            <person name="Deshazo D.R."/>
            <person name="Donlin J.E."/>
            <person name="D'Souza L."/>
            <person name="Eaves K.A."/>
            <person name="Egan A."/>
            <person name="Emery-Cohen A.J."/>
            <person name="Escotto M."/>
            <person name="Flagg N."/>
            <person name="Forbes L.D."/>
            <person name="Gabisi A.M."/>
            <person name="Garza M."/>
            <person name="Hamilton C."/>
            <person name="Henderson N."/>
            <person name="Hernandez O."/>
            <person name="Hines S."/>
            <person name="Hogues M.E."/>
            <person name="Huang M."/>
            <person name="Idlebird D.G."/>
            <person name="Johnson R."/>
            <person name="Jolivet A."/>
            <person name="Jones S."/>
            <person name="Kagan R."/>
            <person name="King L.M."/>
            <person name="Leal B."/>
            <person name="Lebow H."/>
            <person name="Lee S."/>
            <person name="LeVan J.M."/>
            <person name="Lewis L.C."/>
            <person name="London P."/>
            <person name="Lorensuhewa L.M."/>
            <person name="Loulseged H."/>
            <person name="Lovett D.A."/>
            <person name="Lucier A."/>
            <person name="Lucier R.L."/>
            <person name="Ma J."/>
            <person name="Madu R.C."/>
            <person name="Mapua P."/>
            <person name="Martindale A.D."/>
            <person name="Martinez E."/>
            <person name="Massey E."/>
            <person name="Mawhiney S."/>
            <person name="Meador M.G."/>
            <person name="Mendez S."/>
            <person name="Mercado C."/>
            <person name="Mercado I.C."/>
            <person name="Merritt C.E."/>
            <person name="Miner Z.L."/>
            <person name="Minja E."/>
            <person name="Mitchell T."/>
            <person name="Mohabbat F."/>
            <person name="Mohabbat K."/>
            <person name="Montgomery B."/>
            <person name="Moore N."/>
            <person name="Morris S."/>
            <person name="Munidasa M."/>
            <person name="Ngo R.N."/>
            <person name="Nguyen N.B."/>
            <person name="Nickerson E."/>
            <person name="Nwaokelemeh O.O."/>
            <person name="Nwokenkwo S."/>
            <person name="Obregon M."/>
            <person name="Oguh M."/>
            <person name="Oragunye N."/>
            <person name="Oviedo R.J."/>
            <person name="Parish B.J."/>
            <person name="Parker D.N."/>
            <person name="Parrish J."/>
            <person name="Parks K.L."/>
            <person name="Paul H.A."/>
            <person name="Payton B.A."/>
            <person name="Perez A."/>
            <person name="Perrin W."/>
            <person name="Pickens A."/>
            <person name="Primus E.L."/>
            <person name="Pu L.-L."/>
            <person name="Puazo M."/>
            <person name="Quiles M.M."/>
            <person name="Quiroz J.B."/>
            <person name="Rabata D."/>
            <person name="Reeves K."/>
            <person name="Ruiz S.J."/>
            <person name="Shao H."/>
            <person name="Sisson I."/>
            <person name="Sonaike T."/>
            <person name="Sorelle R.P."/>
            <person name="Sutton A.E."/>
            <person name="Svatek A.F."/>
            <person name="Svetz L.A."/>
            <person name="Tamerisa K.S."/>
            <person name="Taylor T.R."/>
            <person name="Teague B."/>
            <person name="Thomas N."/>
            <person name="Thorn R.D."/>
            <person name="Trejos Z.Y."/>
            <person name="Trevino B.K."/>
            <person name="Ukegbu O.N."/>
            <person name="Urban J.B."/>
            <person name="Vasquez L.I."/>
            <person name="Vera V.A."/>
            <person name="Villasana D.M."/>
            <person name="Wang L."/>
            <person name="Ward-Moore S."/>
            <person name="Warren J.T."/>
            <person name="Wei X."/>
            <person name="White F."/>
            <person name="Williamson A.L."/>
            <person name="Wleczyk R."/>
            <person name="Wooden H.S."/>
            <person name="Wooden S.H."/>
            <person name="Yen J."/>
            <person name="Yoon L."/>
            <person name="Yoon V."/>
            <person name="Zorrilla S.E."/>
            <person name="Nelson D."/>
            <person name="Kucherlapati R."/>
            <person name="Weinstock G."/>
            <person name="Gibbs R.A."/>
        </authorList>
    </citation>
    <scope>NUCLEOTIDE SEQUENCE [LARGE SCALE GENOMIC DNA]</scope>
</reference>
<reference key="3">
    <citation type="journal article" date="2004" name="Genome Res.">
        <title>The status, quality, and expansion of the NIH full-length cDNA project: the Mammalian Gene Collection (MGC).</title>
        <authorList>
            <consortium name="The MGC Project Team"/>
        </authorList>
    </citation>
    <scope>NUCLEOTIDE SEQUENCE [LARGE SCALE MRNA] (ISOFORMS 1 AND 3)</scope>
    <source>
        <tissue>Brain</tissue>
        <tissue>Chondrosarcoma</tissue>
    </source>
</reference>
<reference key="4">
    <citation type="journal article" date="2004" name="Mol. Biol. Cell">
        <title>A unique region of RILP distinguishes it from its related proteins in its regulation of lysosomal morphology and interaction with Rab7 and Rab34.</title>
        <authorList>
            <person name="Wang T."/>
            <person name="Wong K.K."/>
            <person name="Hong W."/>
        </authorList>
    </citation>
    <scope>LACK OF FUNCTION</scope>
    <scope>SUBCELLULAR LOCATION</scope>
    <scope>TISSUE SPECIFICITY</scope>
</reference>
<reference key="5">
    <citation type="journal article" date="2008" name="Proc. Natl. Acad. Sci. U.S.A.">
        <title>A quantitative atlas of mitotic phosphorylation.</title>
        <authorList>
            <person name="Dephoure N."/>
            <person name="Zhou C."/>
            <person name="Villen J."/>
            <person name="Beausoleil S.A."/>
            <person name="Bakalarski C.E."/>
            <person name="Elledge S.J."/>
            <person name="Gygi S.P."/>
        </authorList>
    </citation>
    <scope>IDENTIFICATION BY MASS SPECTROMETRY [LARGE SCALE ANALYSIS]</scope>
    <source>
        <tissue>Cervix carcinoma</tissue>
    </source>
</reference>
<reference key="6">
    <citation type="journal article" date="2011" name="BMC Syst. Biol.">
        <title>Initial characterization of the human central proteome.</title>
        <authorList>
            <person name="Burkard T.R."/>
            <person name="Planyavsky M."/>
            <person name="Kaupe I."/>
            <person name="Breitwieser F.P."/>
            <person name="Buerckstuemmer T."/>
            <person name="Bennett K.L."/>
            <person name="Superti-Furga G."/>
            <person name="Colinge J."/>
        </authorList>
    </citation>
    <scope>IDENTIFICATION BY MASS SPECTROMETRY [LARGE SCALE ANALYSIS]</scope>
</reference>
<reference key="7">
    <citation type="journal article" date="2013" name="J. Proteome Res.">
        <title>Toward a comprehensive characterization of a human cancer cell phosphoproteome.</title>
        <authorList>
            <person name="Zhou H."/>
            <person name="Di Palma S."/>
            <person name="Preisinger C."/>
            <person name="Peng M."/>
            <person name="Polat A.N."/>
            <person name="Heck A.J."/>
            <person name="Mohammed S."/>
        </authorList>
    </citation>
    <scope>PHOSPHORYLATION [LARGE SCALE ANALYSIS] AT SER-259</scope>
    <scope>IDENTIFICATION BY MASS SPECTROMETRY [LARGE SCALE ANALYSIS]</scope>
    <source>
        <tissue>Erythroleukemia</tissue>
    </source>
</reference>
<reference key="8">
    <citation type="journal article" date="2014" name="J. Proteomics">
        <title>An enzyme assisted RP-RPLC approach for in-depth analysis of human liver phosphoproteome.</title>
        <authorList>
            <person name="Bian Y."/>
            <person name="Song C."/>
            <person name="Cheng K."/>
            <person name="Dong M."/>
            <person name="Wang F."/>
            <person name="Huang J."/>
            <person name="Sun D."/>
            <person name="Wang L."/>
            <person name="Ye M."/>
            <person name="Zou H."/>
        </authorList>
    </citation>
    <scope>IDENTIFICATION BY MASS SPECTROMETRY [LARGE SCALE ANALYSIS]</scope>
    <source>
        <tissue>Liver</tissue>
    </source>
</reference>
<reference key="9">
    <citation type="journal article" date="2017" name="Elife">
        <title>Systematic proteomic analysis of LRRK2-mediated Rab GTPase phosphorylation establishes a connection to ciliogenesis.</title>
        <authorList>
            <person name="Steger M."/>
            <person name="Diez F."/>
            <person name="Dhekne H.S."/>
            <person name="Lis P."/>
            <person name="Nirujogi R.S."/>
            <person name="Karayel O."/>
            <person name="Tonelli F."/>
            <person name="Martinez T.N."/>
            <person name="Lorentzen E."/>
            <person name="Pfeffer S.R."/>
            <person name="Alessi D.R."/>
            <person name="Mann M."/>
        </authorList>
    </citation>
    <scope>INTERACTION WITH RAB8A; RAB10 AND RAB12</scope>
    <scope>MUTAGENESIS OF ARG-291; ARG-293; ARG-300; LYS-310 AND LYS-324</scope>
</reference>
<reference key="10">
    <citation type="journal article" date="2018" name="Elife">
        <title>A pathway for Parkinson's Disease LRRK2 kinase to block primary cilia and Sonic hedgehog signaling in the brain.</title>
        <authorList>
            <person name="Dhekne H.S."/>
            <person name="Yanatori I."/>
            <person name="Gomez R.C."/>
            <person name="Tonelli F."/>
            <person name="Diez F."/>
            <person name="Schuele B."/>
            <person name="Steger M."/>
            <person name="Alessi D.R."/>
            <person name="Pfeffer S.R."/>
        </authorList>
    </citation>
    <scope>FUNCTION</scope>
    <scope>INTERACTION WITH RAB8A AND RAB10</scope>
    <scope>SUBCELLULAR LOCATION</scope>
</reference>
<reference key="11">
    <citation type="journal article" date="2022" name="Am. J. Hum. Genet.">
        <title>The CGG repeat expansion in RILPL1 is associated with oculopharyngodistal myopathy type 4.</title>
        <authorList>
            <person name="Yu J."/>
            <person name="Shan J."/>
            <person name="Yu M."/>
            <person name="Di L."/>
            <person name="Xie Z."/>
            <person name="Zhang W."/>
            <person name="Lv H."/>
            <person name="Meng L."/>
            <person name="Zheng Y."/>
            <person name="Zhao Y."/>
            <person name="Gang Q."/>
            <person name="Guo X."/>
            <person name="Wang Y."/>
            <person name="Xi J."/>
            <person name="Zhu W."/>
            <person name="Da Y."/>
            <person name="Hong D."/>
            <person name="Yuan Y."/>
            <person name="Yan C."/>
            <person name="Wang Z."/>
            <person name="Deng J."/>
        </authorList>
    </citation>
    <scope>INVOLVEMENT IN OPDM4</scope>
</reference>
<sequence length="403" mass="47108">MEEERGSALAAESALEKNVAELTVMDVYDIASLVGHEFERVIDQHGCEAIARLMPKVVRVLEILEVLVSRHHVAPELDELRLELDRLRLERMDRIEKERKHQKELELVEDVWRGEAQDLLSQIAQLQEENKQLMTNLSHKDVNFSEEEFQKHEGMSERERQVMKKLKEVVDKQRDEIRAKDRELGLKNEDVEALQQQQTRLMKINHDLRHRVTVVEAQGKALIEQKVELEADLQTKEQEMGSLRAELGKLRERLQGEHSQNGEEEPETEPVGEESISDAEKVAMDLKDPNRPRFTLQELRDVLHERNELKSKVFLLQEELAYYKSEEMEEENRIPQPPPIAHPRTSPQPESGIKRLFSFFSRDKKRLANTQRNVHIQESFGQWANTHRDDGYTEQGQEALQHL</sequence>
<organism>
    <name type="scientific">Homo sapiens</name>
    <name type="common">Human</name>
    <dbReference type="NCBI Taxonomy" id="9606"/>
    <lineage>
        <taxon>Eukaryota</taxon>
        <taxon>Metazoa</taxon>
        <taxon>Chordata</taxon>
        <taxon>Craniata</taxon>
        <taxon>Vertebrata</taxon>
        <taxon>Euteleostomi</taxon>
        <taxon>Mammalia</taxon>
        <taxon>Eutheria</taxon>
        <taxon>Euarchontoglires</taxon>
        <taxon>Primates</taxon>
        <taxon>Haplorrhini</taxon>
        <taxon>Catarrhini</taxon>
        <taxon>Hominidae</taxon>
        <taxon>Homo</taxon>
    </lineage>
</organism>
<proteinExistence type="evidence at protein level"/>
<dbReference type="EMBL" id="AK096697">
    <property type="protein sequence ID" value="BAC04845.1"/>
    <property type="molecule type" value="mRNA"/>
</dbReference>
<dbReference type="EMBL" id="AC055713">
    <property type="status" value="NOT_ANNOTATED_CDS"/>
    <property type="molecule type" value="Genomic_DNA"/>
</dbReference>
<dbReference type="EMBL" id="AC145423">
    <property type="status" value="NOT_ANNOTATED_CDS"/>
    <property type="molecule type" value="Genomic_DNA"/>
</dbReference>
<dbReference type="EMBL" id="BC080626">
    <property type="protein sequence ID" value="AAH80626.1"/>
    <property type="molecule type" value="mRNA"/>
</dbReference>
<dbReference type="EMBL" id="BC089444">
    <property type="protein sequence ID" value="AAH89444.1"/>
    <property type="molecule type" value="mRNA"/>
</dbReference>
<dbReference type="CCDS" id="CCDS45006.1">
    <molecule id="Q5EBL4-1"/>
</dbReference>
<dbReference type="RefSeq" id="NP_001306172.1">
    <property type="nucleotide sequence ID" value="NM_001319243.1"/>
</dbReference>
<dbReference type="RefSeq" id="NP_001306173.1">
    <molecule id="Q5EBL4-3"/>
    <property type="nucleotide sequence ID" value="NM_001319244.2"/>
</dbReference>
<dbReference type="RefSeq" id="NP_001306231.1">
    <molecule id="Q5EBL4-3"/>
    <property type="nucleotide sequence ID" value="NM_001319302.2"/>
</dbReference>
<dbReference type="RefSeq" id="NP_847884.2">
    <molecule id="Q5EBL4-1"/>
    <property type="nucleotide sequence ID" value="NM_178314.5"/>
</dbReference>
<dbReference type="SMR" id="Q5EBL4"/>
<dbReference type="BioGRID" id="131631">
    <property type="interactions" value="18"/>
</dbReference>
<dbReference type="FunCoup" id="Q5EBL4">
    <property type="interactions" value="788"/>
</dbReference>
<dbReference type="IntAct" id="Q5EBL4">
    <property type="interactions" value="16"/>
</dbReference>
<dbReference type="STRING" id="9606.ENSP00000366070"/>
<dbReference type="GlyGen" id="Q5EBL4">
    <property type="glycosylation" value="1 site, 1 O-linked glycan (1 site)"/>
</dbReference>
<dbReference type="iPTMnet" id="Q5EBL4"/>
<dbReference type="PhosphoSitePlus" id="Q5EBL4"/>
<dbReference type="BioMuta" id="RILPL1"/>
<dbReference type="DMDM" id="74736071"/>
<dbReference type="jPOST" id="Q5EBL4"/>
<dbReference type="MassIVE" id="Q5EBL4"/>
<dbReference type="PaxDb" id="9606-ENSP00000366070"/>
<dbReference type="PeptideAtlas" id="Q5EBL4"/>
<dbReference type="ProteomicsDB" id="62761">
    <molecule id="Q5EBL4-1"/>
</dbReference>
<dbReference type="ProteomicsDB" id="62762">
    <molecule id="Q5EBL4-2"/>
</dbReference>
<dbReference type="ProteomicsDB" id="62763">
    <molecule id="Q5EBL4-3"/>
</dbReference>
<dbReference type="Pumba" id="Q5EBL4"/>
<dbReference type="Antibodypedia" id="31816">
    <property type="antibodies" value="100 antibodies from 24 providers"/>
</dbReference>
<dbReference type="DNASU" id="353116"/>
<dbReference type="Ensembl" id="ENST00000376874.9">
    <molecule id="Q5EBL4-1"/>
    <property type="protein sequence ID" value="ENSP00000366070.4"/>
    <property type="gene ID" value="ENSG00000188026.13"/>
</dbReference>
<dbReference type="GeneID" id="353116"/>
<dbReference type="KEGG" id="hsa:353116"/>
<dbReference type="MANE-Select" id="ENST00000376874.9">
    <property type="protein sequence ID" value="ENSP00000366070.4"/>
    <property type="RefSeq nucleotide sequence ID" value="NM_178314.5"/>
    <property type="RefSeq protein sequence ID" value="NP_847884.2"/>
</dbReference>
<dbReference type="UCSC" id="uc001ufe.3">
    <molecule id="Q5EBL4-1"/>
    <property type="organism name" value="human"/>
</dbReference>
<dbReference type="AGR" id="HGNC:26814"/>
<dbReference type="CTD" id="353116"/>
<dbReference type="DisGeNET" id="353116"/>
<dbReference type="GeneCards" id="RILPL1"/>
<dbReference type="HGNC" id="HGNC:26814">
    <property type="gene designation" value="RILPL1"/>
</dbReference>
<dbReference type="HPA" id="ENSG00000188026">
    <property type="expression patterns" value="Tissue enhanced (heart muscle, skeletal muscle)"/>
</dbReference>
<dbReference type="MalaCards" id="RILPL1"/>
<dbReference type="MIM" id="614092">
    <property type="type" value="gene"/>
</dbReference>
<dbReference type="MIM" id="619790">
    <property type="type" value="phenotype"/>
</dbReference>
<dbReference type="neXtProt" id="NX_Q5EBL4"/>
<dbReference type="OpenTargets" id="ENSG00000188026"/>
<dbReference type="Orphanet" id="98897">
    <property type="disease" value="Oculopharyngodistal myopathy"/>
</dbReference>
<dbReference type="PharmGKB" id="PA162401302"/>
<dbReference type="VEuPathDB" id="HostDB:ENSG00000188026"/>
<dbReference type="eggNOG" id="ENOG502QR9G">
    <property type="taxonomic scope" value="Eukaryota"/>
</dbReference>
<dbReference type="GeneTree" id="ENSGT00940000157897"/>
<dbReference type="HOGENOM" id="CLU_044133_3_0_1"/>
<dbReference type="InParanoid" id="Q5EBL4"/>
<dbReference type="OMA" id="SFGQWAD"/>
<dbReference type="OrthoDB" id="10069524at2759"/>
<dbReference type="PAN-GO" id="Q5EBL4">
    <property type="GO annotations" value="3 GO annotations based on evolutionary models"/>
</dbReference>
<dbReference type="PhylomeDB" id="Q5EBL4"/>
<dbReference type="TreeFam" id="TF313489"/>
<dbReference type="PathwayCommons" id="Q5EBL4"/>
<dbReference type="SignaLink" id="Q5EBL4"/>
<dbReference type="BioGRID-ORCS" id="353116">
    <property type="hits" value="24 hits in 1164 CRISPR screens"/>
</dbReference>
<dbReference type="CD-CODE" id="8C2F96ED">
    <property type="entry name" value="Centrosome"/>
</dbReference>
<dbReference type="ChiTaRS" id="RILPL1">
    <property type="organism name" value="human"/>
</dbReference>
<dbReference type="GenomeRNAi" id="353116"/>
<dbReference type="Pharos" id="Q5EBL4">
    <property type="development level" value="Tbio"/>
</dbReference>
<dbReference type="PRO" id="PR:Q5EBL4"/>
<dbReference type="Proteomes" id="UP000005640">
    <property type="component" value="Chromosome 12"/>
</dbReference>
<dbReference type="RNAct" id="Q5EBL4">
    <property type="molecule type" value="protein"/>
</dbReference>
<dbReference type="Bgee" id="ENSG00000188026">
    <property type="expression patterns" value="Expressed in left ventricle myocardium and 171 other cell types or tissues"/>
</dbReference>
<dbReference type="ExpressionAtlas" id="Q5EBL4">
    <property type="expression patterns" value="baseline and differential"/>
</dbReference>
<dbReference type="GO" id="GO:0005814">
    <property type="term" value="C:centriole"/>
    <property type="evidence" value="ECO:0007669"/>
    <property type="project" value="UniProtKB-SubCell"/>
</dbReference>
<dbReference type="GO" id="GO:0005813">
    <property type="term" value="C:centrosome"/>
    <property type="evidence" value="ECO:0000314"/>
    <property type="project" value="HPA"/>
</dbReference>
<dbReference type="GO" id="GO:0036064">
    <property type="term" value="C:ciliary basal body"/>
    <property type="evidence" value="ECO:0000314"/>
    <property type="project" value="HPA"/>
</dbReference>
<dbReference type="GO" id="GO:0005929">
    <property type="term" value="C:cilium"/>
    <property type="evidence" value="ECO:0000314"/>
    <property type="project" value="HPA"/>
</dbReference>
<dbReference type="GO" id="GO:0005737">
    <property type="term" value="C:cytoplasm"/>
    <property type="evidence" value="ECO:0000318"/>
    <property type="project" value="GO_Central"/>
</dbReference>
<dbReference type="GO" id="GO:0005829">
    <property type="term" value="C:cytosol"/>
    <property type="evidence" value="ECO:0000314"/>
    <property type="project" value="HPA"/>
</dbReference>
<dbReference type="GO" id="GO:0005654">
    <property type="term" value="C:nucleoplasm"/>
    <property type="evidence" value="ECO:0000314"/>
    <property type="project" value="HPA"/>
</dbReference>
<dbReference type="GO" id="GO:0005886">
    <property type="term" value="C:plasma membrane"/>
    <property type="evidence" value="ECO:0000314"/>
    <property type="project" value="HPA"/>
</dbReference>
<dbReference type="GO" id="GO:0051959">
    <property type="term" value="F:dynein light intermediate chain binding"/>
    <property type="evidence" value="ECO:0000318"/>
    <property type="project" value="GO_Central"/>
</dbReference>
<dbReference type="GO" id="GO:0046983">
    <property type="term" value="F:protein dimerization activity"/>
    <property type="evidence" value="ECO:0007669"/>
    <property type="project" value="InterPro"/>
</dbReference>
<dbReference type="GO" id="GO:0031267">
    <property type="term" value="F:small GTPase binding"/>
    <property type="evidence" value="ECO:0000318"/>
    <property type="project" value="GO_Central"/>
</dbReference>
<dbReference type="GO" id="GO:0060271">
    <property type="term" value="P:cilium assembly"/>
    <property type="evidence" value="ECO:0000318"/>
    <property type="project" value="GO_Central"/>
</dbReference>
<dbReference type="GO" id="GO:0003382">
    <property type="term" value="P:epithelial cell morphogenesis"/>
    <property type="evidence" value="ECO:0000250"/>
    <property type="project" value="UniProtKB"/>
</dbReference>
<dbReference type="GO" id="GO:0007263">
    <property type="term" value="P:nitric oxide mediated signal transduction"/>
    <property type="evidence" value="ECO:0000250"/>
    <property type="project" value="UniProtKB"/>
</dbReference>
<dbReference type="GO" id="GO:1903445">
    <property type="term" value="P:protein transport from ciliary membrane to plasma membrane"/>
    <property type="evidence" value="ECO:0000250"/>
    <property type="project" value="UniProtKB"/>
</dbReference>
<dbReference type="CDD" id="cd14445">
    <property type="entry name" value="RILP-like"/>
    <property type="match status" value="1"/>
</dbReference>
<dbReference type="FunFam" id="1.20.58.1770:FF:000002">
    <property type="entry name" value="RILP-like protein 1 isoform X1"/>
    <property type="match status" value="1"/>
</dbReference>
<dbReference type="Gene3D" id="1.20.58.1770">
    <property type="match status" value="1"/>
</dbReference>
<dbReference type="Gene3D" id="6.10.230.10">
    <property type="match status" value="1"/>
</dbReference>
<dbReference type="InterPro" id="IPR051241">
    <property type="entry name" value="DZIP_RILPL"/>
</dbReference>
<dbReference type="InterPro" id="IPR034743">
    <property type="entry name" value="RH1"/>
</dbReference>
<dbReference type="InterPro" id="IPR034744">
    <property type="entry name" value="RH2"/>
</dbReference>
<dbReference type="InterPro" id="IPR021563">
    <property type="entry name" value="RILP_dimer"/>
</dbReference>
<dbReference type="PANTHER" id="PTHR21502:SF6">
    <property type="entry name" value="RILP-LIKE PROTEIN 1"/>
    <property type="match status" value="1"/>
</dbReference>
<dbReference type="PANTHER" id="PTHR21502">
    <property type="entry name" value="ZINC FINGER PROTEIN DZIP1"/>
    <property type="match status" value="1"/>
</dbReference>
<dbReference type="Pfam" id="PF09744">
    <property type="entry name" value="RH1"/>
    <property type="match status" value="1"/>
</dbReference>
<dbReference type="Pfam" id="PF11461">
    <property type="entry name" value="RILP"/>
    <property type="match status" value="1"/>
</dbReference>
<dbReference type="SUPFAM" id="SSF161256">
    <property type="entry name" value="RILP dimerisation region"/>
    <property type="match status" value="1"/>
</dbReference>
<dbReference type="PROSITE" id="PS51776">
    <property type="entry name" value="RH1"/>
    <property type="match status" value="1"/>
</dbReference>
<dbReference type="PROSITE" id="PS51777">
    <property type="entry name" value="RH2"/>
    <property type="match status" value="1"/>
</dbReference>
<gene>
    <name type="primary">RILPL1</name>
    <name type="synonym">RLP1</name>
</gene>
<protein>
    <recommendedName>
        <fullName>RILP-like protein 1</fullName>
    </recommendedName>
    <alternativeName>
        <fullName>Rab-interacting lysosomal-like protein 1</fullName>
    </alternativeName>
</protein>
<accession>Q5EBL4</accession>
<accession>Q66K36</accession>
<accession>Q8N1M0</accession>
<evidence type="ECO:0000250" key="1"/>
<evidence type="ECO:0000250" key="2">
    <source>
        <dbReference type="UniProtKB" id="D3ZUQ0"/>
    </source>
</evidence>
<evidence type="ECO:0000250" key="3">
    <source>
        <dbReference type="UniProtKB" id="Q9JJC6"/>
    </source>
</evidence>
<evidence type="ECO:0000255" key="4"/>
<evidence type="ECO:0000255" key="5">
    <source>
        <dbReference type="PROSITE-ProRule" id="PRU01112"/>
    </source>
</evidence>
<evidence type="ECO:0000255" key="6">
    <source>
        <dbReference type="PROSITE-ProRule" id="PRU01113"/>
    </source>
</evidence>
<evidence type="ECO:0000256" key="7">
    <source>
        <dbReference type="SAM" id="MobiDB-lite"/>
    </source>
</evidence>
<evidence type="ECO:0000269" key="8">
    <source>
    </source>
</evidence>
<evidence type="ECO:0000269" key="9">
    <source>
    </source>
</evidence>
<evidence type="ECO:0000269" key="10">
    <source>
    </source>
</evidence>
<evidence type="ECO:0000269" key="11">
    <source>
    </source>
</evidence>
<evidence type="ECO:0000303" key="12">
    <source>
    </source>
</evidence>
<evidence type="ECO:0000303" key="13">
    <source>
    </source>
</evidence>
<evidence type="ECO:0000305" key="14"/>
<evidence type="ECO:0007744" key="15">
    <source>
    </source>
</evidence>
<name>RIPL1_HUMAN</name>